<name>RLMH_STRA1</name>
<evidence type="ECO:0000255" key="1">
    <source>
        <dbReference type="HAMAP-Rule" id="MF_00658"/>
    </source>
</evidence>
<proteinExistence type="inferred from homology"/>
<organism>
    <name type="scientific">Streptococcus agalactiae serotype Ia (strain ATCC 27591 / A909 / CDC SS700)</name>
    <dbReference type="NCBI Taxonomy" id="205921"/>
    <lineage>
        <taxon>Bacteria</taxon>
        <taxon>Bacillati</taxon>
        <taxon>Bacillota</taxon>
        <taxon>Bacilli</taxon>
        <taxon>Lactobacillales</taxon>
        <taxon>Streptococcaceae</taxon>
        <taxon>Streptococcus</taxon>
    </lineage>
</organism>
<protein>
    <recommendedName>
        <fullName evidence="1">Ribosomal RNA large subunit methyltransferase H</fullName>
        <ecNumber evidence="1">2.1.1.177</ecNumber>
    </recommendedName>
    <alternativeName>
        <fullName evidence="1">23S rRNA (pseudouridine1915-N3)-methyltransferase</fullName>
    </alternativeName>
    <alternativeName>
        <fullName evidence="1">23S rRNA m3Psi1915 methyltransferase</fullName>
    </alternativeName>
    <alternativeName>
        <fullName evidence="1">rRNA (pseudouridine-N3-)-methyltransferase RlmH</fullName>
    </alternativeName>
</protein>
<comment type="function">
    <text evidence="1">Specifically methylates the pseudouridine at position 1915 (m3Psi1915) in 23S rRNA.</text>
</comment>
<comment type="catalytic activity">
    <reaction evidence="1">
        <text>pseudouridine(1915) in 23S rRNA + S-adenosyl-L-methionine = N(3)-methylpseudouridine(1915) in 23S rRNA + S-adenosyl-L-homocysteine + H(+)</text>
        <dbReference type="Rhea" id="RHEA:42752"/>
        <dbReference type="Rhea" id="RHEA-COMP:10221"/>
        <dbReference type="Rhea" id="RHEA-COMP:10222"/>
        <dbReference type="ChEBI" id="CHEBI:15378"/>
        <dbReference type="ChEBI" id="CHEBI:57856"/>
        <dbReference type="ChEBI" id="CHEBI:59789"/>
        <dbReference type="ChEBI" id="CHEBI:65314"/>
        <dbReference type="ChEBI" id="CHEBI:74486"/>
        <dbReference type="EC" id="2.1.1.177"/>
    </reaction>
</comment>
<comment type="subunit">
    <text evidence="1">Homodimer.</text>
</comment>
<comment type="subcellular location">
    <subcellularLocation>
        <location evidence="1">Cytoplasm</location>
    </subcellularLocation>
</comment>
<comment type="similarity">
    <text evidence="1">Belongs to the RNA methyltransferase RlmH family.</text>
</comment>
<dbReference type="EC" id="2.1.1.177" evidence="1"/>
<dbReference type="EMBL" id="CP000114">
    <property type="protein sequence ID" value="ABA44917.1"/>
    <property type="molecule type" value="Genomic_DNA"/>
</dbReference>
<dbReference type="RefSeq" id="WP_000768335.1">
    <property type="nucleotide sequence ID" value="NC_007432.1"/>
</dbReference>
<dbReference type="SMR" id="Q3JYD2"/>
<dbReference type="GeneID" id="66886911"/>
<dbReference type="KEGG" id="sak:SAK_2134"/>
<dbReference type="HOGENOM" id="CLU_100552_0_0_9"/>
<dbReference type="GO" id="GO:0005737">
    <property type="term" value="C:cytoplasm"/>
    <property type="evidence" value="ECO:0007669"/>
    <property type="project" value="UniProtKB-SubCell"/>
</dbReference>
<dbReference type="GO" id="GO:0070038">
    <property type="term" value="F:rRNA (pseudouridine-N3-)-methyltransferase activity"/>
    <property type="evidence" value="ECO:0007669"/>
    <property type="project" value="UniProtKB-UniRule"/>
</dbReference>
<dbReference type="CDD" id="cd18081">
    <property type="entry name" value="RlmH-like"/>
    <property type="match status" value="1"/>
</dbReference>
<dbReference type="Gene3D" id="3.40.1280.10">
    <property type="match status" value="1"/>
</dbReference>
<dbReference type="HAMAP" id="MF_00658">
    <property type="entry name" value="23SrRNA_methyltr_H"/>
    <property type="match status" value="1"/>
</dbReference>
<dbReference type="InterPro" id="IPR029028">
    <property type="entry name" value="Alpha/beta_knot_MTases"/>
</dbReference>
<dbReference type="InterPro" id="IPR003742">
    <property type="entry name" value="RlmH-like"/>
</dbReference>
<dbReference type="InterPro" id="IPR029026">
    <property type="entry name" value="tRNA_m1G_MTases_N"/>
</dbReference>
<dbReference type="NCBIfam" id="NF000985">
    <property type="entry name" value="PRK00103.1-3"/>
    <property type="match status" value="1"/>
</dbReference>
<dbReference type="NCBIfam" id="TIGR00246">
    <property type="entry name" value="tRNA_RlmH_YbeA"/>
    <property type="match status" value="1"/>
</dbReference>
<dbReference type="PANTHER" id="PTHR33603">
    <property type="entry name" value="METHYLTRANSFERASE"/>
    <property type="match status" value="1"/>
</dbReference>
<dbReference type="PANTHER" id="PTHR33603:SF1">
    <property type="entry name" value="RIBOSOMAL RNA LARGE SUBUNIT METHYLTRANSFERASE H"/>
    <property type="match status" value="1"/>
</dbReference>
<dbReference type="Pfam" id="PF02590">
    <property type="entry name" value="SPOUT_MTase"/>
    <property type="match status" value="1"/>
</dbReference>
<dbReference type="PIRSF" id="PIRSF004505">
    <property type="entry name" value="MT_bac"/>
    <property type="match status" value="1"/>
</dbReference>
<dbReference type="SUPFAM" id="SSF75217">
    <property type="entry name" value="alpha/beta knot"/>
    <property type="match status" value="1"/>
</dbReference>
<sequence>MKLKIITVGKLKEKYLKEGVAEYQKRLNRFSKIETIELADEKTPDKASISENQRILDIEGERILSKIGERDYVIGLAIEGKQLPSESFSHLIDQKMISGYSTITFVIGGSLGLSQKVKKRADYLMSFGLLTLPHQLMKLVLMEQIYRAFMIRQGTPYHK</sequence>
<accession>Q3JYD2</accession>
<keyword id="KW-0963">Cytoplasm</keyword>
<keyword id="KW-0489">Methyltransferase</keyword>
<keyword id="KW-0698">rRNA processing</keyword>
<keyword id="KW-0949">S-adenosyl-L-methionine</keyword>
<keyword id="KW-0808">Transferase</keyword>
<reference key="1">
    <citation type="journal article" date="2005" name="Proc. Natl. Acad. Sci. U.S.A.">
        <title>Genome analysis of multiple pathogenic isolates of Streptococcus agalactiae: implications for the microbial 'pan-genome'.</title>
        <authorList>
            <person name="Tettelin H."/>
            <person name="Masignani V."/>
            <person name="Cieslewicz M.J."/>
            <person name="Donati C."/>
            <person name="Medini D."/>
            <person name="Ward N.L."/>
            <person name="Angiuoli S.V."/>
            <person name="Crabtree J."/>
            <person name="Jones A.L."/>
            <person name="Durkin A.S."/>
            <person name="DeBoy R.T."/>
            <person name="Davidsen T.M."/>
            <person name="Mora M."/>
            <person name="Scarselli M."/>
            <person name="Margarit y Ros I."/>
            <person name="Peterson J.D."/>
            <person name="Hauser C.R."/>
            <person name="Sundaram J.P."/>
            <person name="Nelson W.C."/>
            <person name="Madupu R."/>
            <person name="Brinkac L.M."/>
            <person name="Dodson R.J."/>
            <person name="Rosovitz M.J."/>
            <person name="Sullivan S.A."/>
            <person name="Daugherty S.C."/>
            <person name="Haft D.H."/>
            <person name="Selengut J."/>
            <person name="Gwinn M.L."/>
            <person name="Zhou L."/>
            <person name="Zafar N."/>
            <person name="Khouri H."/>
            <person name="Radune D."/>
            <person name="Dimitrov G."/>
            <person name="Watkins K."/>
            <person name="O'Connor K.J."/>
            <person name="Smith S."/>
            <person name="Utterback T.R."/>
            <person name="White O."/>
            <person name="Rubens C.E."/>
            <person name="Grandi G."/>
            <person name="Madoff L.C."/>
            <person name="Kasper D.L."/>
            <person name="Telford J.L."/>
            <person name="Wessels M.R."/>
            <person name="Rappuoli R."/>
            <person name="Fraser C.M."/>
        </authorList>
    </citation>
    <scope>NUCLEOTIDE SEQUENCE [LARGE SCALE GENOMIC DNA]</scope>
    <source>
        <strain>ATCC 27591 / A909 / CDC SS700</strain>
    </source>
</reference>
<gene>
    <name evidence="1" type="primary">rlmH</name>
    <name type="ordered locus">SAK_2134</name>
</gene>
<feature type="chain" id="PRO_0000260617" description="Ribosomal RNA large subunit methyltransferase H">
    <location>
        <begin position="1"/>
        <end position="159"/>
    </location>
</feature>
<feature type="binding site" evidence="1">
    <location>
        <position position="76"/>
    </location>
    <ligand>
        <name>S-adenosyl-L-methionine</name>
        <dbReference type="ChEBI" id="CHEBI:59789"/>
    </ligand>
</feature>
<feature type="binding site" evidence="1">
    <location>
        <position position="108"/>
    </location>
    <ligand>
        <name>S-adenosyl-L-methionine</name>
        <dbReference type="ChEBI" id="CHEBI:59789"/>
    </ligand>
</feature>
<feature type="binding site" evidence="1">
    <location>
        <begin position="127"/>
        <end position="132"/>
    </location>
    <ligand>
        <name>S-adenosyl-L-methionine</name>
        <dbReference type="ChEBI" id="CHEBI:59789"/>
    </ligand>
</feature>